<comment type="function">
    <text evidence="2 3 5 6 7 10">Multifunctional glycoprotein that acts as a receptor for a broad range of ligands. Ligands can be of proteinaceous nature like thrombospondin, fibronectin, collagen or amyloid-beta as well as of lipidic nature such as oxidized low-density lipoprotein (oxLDL), anionic phospholipids, long-chain fatty acids and bacterial diacylated lipopeptides. They are generally multivalent and can therefore engage multiple receptors simultaneously, the resulting formation of CD36 clusters initiates signal transduction and internalization of receptor-ligand complexes. The dependency on coreceptor signaling is strongly ligand specific. Cellular responses to these ligands are involved in angiogenesis, inflammatory response, fatty acid metabolism, taste and dietary fat processing in the intestine (By similarity) (PubMed:8320718). Binds long-chain fatty acids and facilitates their transport into cells, thus participating in muscle lipid utilization, adipose energy storage, and gut fat absorption (By similarity) (PubMed:8320718). Mechanistically, binding of fatty acids activates downstream kinase LYN, which phosphorylates the palmitoyltransferase ZDHHC5 and inactivates it, resulting in the subsequent depalmitoylation of CD36 and caveolar endocytosis (By similarity). In the small intestine, plays a role in proximal absorption of dietary fatty acid and cholesterol for optimal chylomicron formation, possibly through the activation of MAPK1/3 (ERK1/2) signaling pathway (By similarity) (PubMed:16276419, PubMed:21610069). Involved in oral fat perception and preferences (By similarity) (PubMed:16276419). Detection into the tongue of long-chain fatty acids leads to a rapid and sustained rise in flux and protein content of pancreatobiliary secretions (By similarity) (PubMed:16276419). In taste receptor cells, mediates the induction of an increase in intracellular calcium levels by long-chain fatty acids, leading to the activation of the gustatory neurons in the nucleus of the solitary tract (By similarity). Important factor in both ventromedial hypothalamus neuronal sensing of long-chain fatty acid and the regulation of energy and glucose homeostasis (By similarity) (PubMed:23557700). Receptor for thrombospondins, THBS1 and THBS2, mediating their antiangiogenic effects (By similarity). As a coreceptor for TLR4:TLR6 heterodimer, promotes inflammation in monocytes/macrophages. Upon ligand binding, such as oxLDL or amyloid-beta 42, interacts with the heterodimer TLR4:TLR6, the complex is internalized and triggers inflammatory response, leading to NF-kappa-B-dependent production of CXCL1, CXCL2 and CCL9 cytokines, via MYD88 signaling pathway, and CCL5 cytokine, via TICAM1 signaling pathway, as well as IL1B secretion, through the priming and activation of the NLRP3 inflammasome. Selective and nonredundant sensor of microbial diacylated lipopeptide that signal via TLR2:TLR6 heterodimer, this cluster triggers signaling from the cell surface, leading to the NF-kappa-B-dependent production of TNF, via MYD88 signaling pathway and subsequently is targeted to the Golgi in a lipid-raft dependent pathway (By similarity).</text>
</comment>
<comment type="catalytic activity">
    <reaction evidence="2">
        <text>butanoate(out) = butanoate(in)</text>
        <dbReference type="Rhea" id="RHEA:45248"/>
        <dbReference type="ChEBI" id="CHEBI:17968"/>
    </reaction>
    <physiologicalReaction direction="left-to-right" evidence="2">
        <dbReference type="Rhea" id="RHEA:45249"/>
    </physiologicalReaction>
</comment>
<comment type="catalytic activity">
    <reaction evidence="2">
        <text>(9Z)-octadecenoate(out) = (9Z)-octadecenoate(in)</text>
        <dbReference type="Rhea" id="RHEA:33655"/>
        <dbReference type="ChEBI" id="CHEBI:30823"/>
    </reaction>
    <physiologicalReaction direction="left-to-right" evidence="2">
        <dbReference type="Rhea" id="RHEA:33656"/>
    </physiologicalReaction>
</comment>
<comment type="catalytic activity">
    <reaction evidence="2">
        <text>(9Z,12Z)-octadecadienoate(out) = (9Z,12Z)-octadecadienoate(in)</text>
        <dbReference type="Rhea" id="RHEA:45264"/>
        <dbReference type="ChEBI" id="CHEBI:30245"/>
    </reaction>
    <physiologicalReaction direction="left-to-right" evidence="2">
        <dbReference type="Rhea" id="RHEA:45265"/>
    </physiologicalReaction>
</comment>
<comment type="catalytic activity">
    <reaction evidence="2">
        <text>tetradecanoate(out) = tetradecanoate(in)</text>
        <dbReference type="Rhea" id="RHEA:45252"/>
        <dbReference type="ChEBI" id="CHEBI:30807"/>
    </reaction>
    <physiologicalReaction direction="left-to-right" evidence="2">
        <dbReference type="Rhea" id="RHEA:45253"/>
    </physiologicalReaction>
</comment>
<comment type="catalytic activity">
    <reaction evidence="2">
        <text>hexadecanoate(out) = hexadecanoate(in)</text>
        <dbReference type="Rhea" id="RHEA:45256"/>
        <dbReference type="ChEBI" id="CHEBI:7896"/>
    </reaction>
    <physiologicalReaction direction="left-to-right" evidence="2">
        <dbReference type="Rhea" id="RHEA:45257"/>
    </physiologicalReaction>
</comment>
<comment type="catalytic activity">
    <reaction evidence="2">
        <text>tetracosanoate(out) = tetracosanoate(in)</text>
        <dbReference type="Rhea" id="RHEA:45260"/>
        <dbReference type="ChEBI" id="CHEBI:31014"/>
    </reaction>
    <physiologicalReaction direction="left-to-right" evidence="2">
        <dbReference type="Rhea" id="RHEA:45261"/>
    </physiologicalReaction>
</comment>
<comment type="subunit">
    <text evidence="2 3">Interacts with THBS1 and THBS2; the interactions mediate the THBS antiangiogenic activity. Upon interaction with a ligand, such as oxidized low-density lipoprotein (oxLDL) or amyloid-beta 42, rapidly forms a complex with TLR4 and TLR6; the complex is internalized and triggers an inflammatory signal. Through its C-terminus, interacts with PTK2, PXN and LYN, but not with SRC. LYN kinase activity is required for facilitating TLR4:TLR6 heterodimerization and signal initiation. Upon interaction with ligands such as diacylated lipopeptides, interacts with the TLR2:TLR6 heterodimer (By similarity). Interacts with CD9, CD81, FCER1G, ITGB2 and/or ITGB2; forming a membrane heteromeric complex required for the internalization of CD36 and its ligands (By similarity). Interacts (when palmitoylated) with ARF6; this interaction mediates CD36 transport to the plasma membrane (By similarity).</text>
</comment>
<comment type="subcellular location">
    <subcellularLocation>
        <location evidence="6">Cell membrane</location>
        <topology evidence="4">Multi-pass membrane protein</topology>
    </subcellularLocation>
    <subcellularLocation>
        <location evidence="2">Membrane raft</location>
    </subcellularLocation>
    <subcellularLocation>
        <location evidence="2">Golgi apparatus</location>
    </subcellularLocation>
    <subcellularLocation>
        <location evidence="6">Apical cell membrane</location>
    </subcellularLocation>
    <text evidence="2">Upon ligand-binding, internalized through dynamin-dependent endocytosis.</text>
</comment>
<comment type="tissue specificity">
    <text evidence="9">Expressed at high levels in heart, intestine, spleen, adipose tissue, skeletal muscle and, at lower levels, in testes.</text>
</comment>
<comment type="developmental stage">
    <text evidence="9">Induced during preadipocyte differentiation.</text>
</comment>
<comment type="PTM">
    <text evidence="2">Palmitoylated by ZDHHC5. Palmitoylation is required for proper localization at the plasma membrane.</text>
</comment>
<comment type="PTM">
    <text evidence="2 3 6">Ubiquitinated at Lys-469 and Lys-472. Ubiquitination is induced by fatty acids such as oleic acid and leads to degradation by the proteasome (PubMed:21610069). Ubiquitination and degradation are inhibited by insulin which blocks the effect of fatty acids (By similarity).</text>
</comment>
<comment type="similarity">
    <text evidence="11">Belongs to the CD36 family.</text>
</comment>
<dbReference type="EMBL" id="L19658">
    <property type="protein sequence ID" value="AAA02878.1"/>
    <property type="molecule type" value="mRNA"/>
</dbReference>
<dbReference type="EMBL" id="AF072411">
    <property type="protein sequence ID" value="AAC24876.1"/>
    <property type="molecule type" value="mRNA"/>
</dbReference>
<dbReference type="EMBL" id="AF113914">
    <property type="protein sequence ID" value="AAF25552.1"/>
    <property type="molecule type" value="mRNA"/>
</dbReference>
<dbReference type="PIR" id="A47402">
    <property type="entry name" value="A47402"/>
</dbReference>
<dbReference type="SMR" id="Q07969"/>
<dbReference type="FunCoup" id="Q07969">
    <property type="interactions" value="91"/>
</dbReference>
<dbReference type="STRING" id="10116.ENSRNOP00000070601"/>
<dbReference type="BindingDB" id="Q07969"/>
<dbReference type="ChEMBL" id="CHEMBL2163174"/>
<dbReference type="GlyCosmos" id="Q07969">
    <property type="glycosylation" value="9 sites, No reported glycans"/>
</dbReference>
<dbReference type="GlyGen" id="Q07969">
    <property type="glycosylation" value="9 sites"/>
</dbReference>
<dbReference type="iPTMnet" id="Q07969"/>
<dbReference type="PhosphoSitePlus" id="Q07969"/>
<dbReference type="SwissPalm" id="Q07969"/>
<dbReference type="PaxDb" id="10116-ENSRNOP00000058398"/>
<dbReference type="AGR" id="RGD:2301"/>
<dbReference type="RGD" id="2301">
    <property type="gene designation" value="Cd36"/>
</dbReference>
<dbReference type="eggNOG" id="KOG3776">
    <property type="taxonomic scope" value="Eukaryota"/>
</dbReference>
<dbReference type="InParanoid" id="Q07969"/>
<dbReference type="PhylomeDB" id="Q07969"/>
<dbReference type="Reactome" id="R-RNO-114608">
    <property type="pathway name" value="Platelet degranulation"/>
</dbReference>
<dbReference type="Reactome" id="R-RNO-1236973">
    <property type="pathway name" value="Cross-presentation of particulate exogenous antigens (phagosomes)"/>
</dbReference>
<dbReference type="Reactome" id="R-RNO-3000471">
    <property type="pathway name" value="Scavenging by Class B Receptors"/>
</dbReference>
<dbReference type="Reactome" id="R-RNO-434313">
    <property type="pathway name" value="Intracellular metabolism of fatty acids regulates insulin secretion"/>
</dbReference>
<dbReference type="Reactome" id="R-RNO-5686938">
    <property type="pathway name" value="Regulation of TLR by endogenous ligand"/>
</dbReference>
<dbReference type="Reactome" id="R-RNO-6798695">
    <property type="pathway name" value="Neutrophil degranulation"/>
</dbReference>
<dbReference type="PRO" id="PR:Q07969"/>
<dbReference type="Proteomes" id="UP000002494">
    <property type="component" value="Unplaced"/>
</dbReference>
<dbReference type="GO" id="GO:0045177">
    <property type="term" value="C:apical part of cell"/>
    <property type="evidence" value="ECO:0000314"/>
    <property type="project" value="RGD"/>
</dbReference>
<dbReference type="GO" id="GO:0016324">
    <property type="term" value="C:apical plasma membrane"/>
    <property type="evidence" value="ECO:0007669"/>
    <property type="project" value="UniProtKB-SubCell"/>
</dbReference>
<dbReference type="GO" id="GO:0031526">
    <property type="term" value="C:brush border membrane"/>
    <property type="evidence" value="ECO:0000314"/>
    <property type="project" value="UniProtKB"/>
</dbReference>
<dbReference type="GO" id="GO:0005901">
    <property type="term" value="C:caveola"/>
    <property type="evidence" value="ECO:0000314"/>
    <property type="project" value="RGD"/>
</dbReference>
<dbReference type="GO" id="GO:0071944">
    <property type="term" value="C:cell periphery"/>
    <property type="evidence" value="ECO:0000266"/>
    <property type="project" value="RGD"/>
</dbReference>
<dbReference type="GO" id="GO:0009986">
    <property type="term" value="C:cell surface"/>
    <property type="evidence" value="ECO:0000314"/>
    <property type="project" value="BHF-UCL"/>
</dbReference>
<dbReference type="GO" id="GO:0009897">
    <property type="term" value="C:external side of plasma membrane"/>
    <property type="evidence" value="ECO:0000266"/>
    <property type="project" value="RGD"/>
</dbReference>
<dbReference type="GO" id="GO:0005794">
    <property type="term" value="C:Golgi apparatus"/>
    <property type="evidence" value="ECO:0000250"/>
    <property type="project" value="UniProtKB"/>
</dbReference>
<dbReference type="GO" id="GO:0016020">
    <property type="term" value="C:membrane"/>
    <property type="evidence" value="ECO:0000266"/>
    <property type="project" value="RGD"/>
</dbReference>
<dbReference type="GO" id="GO:0045121">
    <property type="term" value="C:membrane raft"/>
    <property type="evidence" value="ECO:0000266"/>
    <property type="project" value="RGD"/>
</dbReference>
<dbReference type="GO" id="GO:0005886">
    <property type="term" value="C:plasma membrane"/>
    <property type="evidence" value="ECO:0000266"/>
    <property type="project" value="RGD"/>
</dbReference>
<dbReference type="GO" id="GO:0032991">
    <property type="term" value="C:protein-containing complex"/>
    <property type="evidence" value="ECO:0000314"/>
    <property type="project" value="RGD"/>
</dbReference>
<dbReference type="GO" id="GO:0043235">
    <property type="term" value="C:receptor complex"/>
    <property type="evidence" value="ECO:0000266"/>
    <property type="project" value="RGD"/>
</dbReference>
<dbReference type="GO" id="GO:0042383">
    <property type="term" value="C:sarcolemma"/>
    <property type="evidence" value="ECO:0000314"/>
    <property type="project" value="RGD"/>
</dbReference>
<dbReference type="GO" id="GO:0001540">
    <property type="term" value="F:amyloid-beta binding"/>
    <property type="evidence" value="ECO:0000266"/>
    <property type="project" value="RGD"/>
</dbReference>
<dbReference type="GO" id="GO:0038024">
    <property type="term" value="F:cargo receptor activity"/>
    <property type="evidence" value="ECO:0000266"/>
    <property type="project" value="RGD"/>
</dbReference>
<dbReference type="GO" id="GO:0008035">
    <property type="term" value="F:high-density lipoprotein particle binding"/>
    <property type="evidence" value="ECO:0000266"/>
    <property type="project" value="RGD"/>
</dbReference>
<dbReference type="GO" id="GO:0008289">
    <property type="term" value="F:lipid binding"/>
    <property type="evidence" value="ECO:0000266"/>
    <property type="project" value="RGD"/>
</dbReference>
<dbReference type="GO" id="GO:0071813">
    <property type="term" value="F:lipoprotein particle binding"/>
    <property type="evidence" value="ECO:0000266"/>
    <property type="project" value="RGD"/>
</dbReference>
<dbReference type="GO" id="GO:0070892">
    <property type="term" value="F:lipoteichoic acid immune receptor activity"/>
    <property type="evidence" value="ECO:0000266"/>
    <property type="project" value="RGD"/>
</dbReference>
<dbReference type="GO" id="GO:0005324">
    <property type="term" value="F:long-chain fatty acid transmembrane transporter activity"/>
    <property type="evidence" value="ECO:0000266"/>
    <property type="project" value="RGD"/>
</dbReference>
<dbReference type="GO" id="GO:0030169">
    <property type="term" value="F:low-density lipoprotein particle binding"/>
    <property type="evidence" value="ECO:0000266"/>
    <property type="project" value="RGD"/>
</dbReference>
<dbReference type="GO" id="GO:0005041">
    <property type="term" value="F:low-density lipoprotein particle receptor activity"/>
    <property type="evidence" value="ECO:0000266"/>
    <property type="project" value="RGD"/>
</dbReference>
<dbReference type="GO" id="GO:1901480">
    <property type="term" value="F:oleate transmembrane transporter activity"/>
    <property type="evidence" value="ECO:0000266"/>
    <property type="project" value="RGD"/>
</dbReference>
<dbReference type="GO" id="GO:0070538">
    <property type="term" value="F:oleic acid binding"/>
    <property type="evidence" value="ECO:0000314"/>
    <property type="project" value="RGD"/>
</dbReference>
<dbReference type="GO" id="GO:0150025">
    <property type="term" value="F:oxidised low-density lipoprotein particle receptor activity"/>
    <property type="evidence" value="ECO:0000266"/>
    <property type="project" value="RGD"/>
</dbReference>
<dbReference type="GO" id="GO:0044877">
    <property type="term" value="F:protein-containing complex binding"/>
    <property type="evidence" value="ECO:0000266"/>
    <property type="project" value="RGD"/>
</dbReference>
<dbReference type="GO" id="GO:0005044">
    <property type="term" value="F:scavenger receptor activity"/>
    <property type="evidence" value="ECO:0000315"/>
    <property type="project" value="ARUK-UCL"/>
</dbReference>
<dbReference type="GO" id="GO:0015636">
    <property type="term" value="F:short-chain fatty acid transmembrane transporter activity"/>
    <property type="evidence" value="ECO:0000266"/>
    <property type="project" value="RGD"/>
</dbReference>
<dbReference type="GO" id="GO:0070053">
    <property type="term" value="F:thrombospondin receptor activity"/>
    <property type="evidence" value="ECO:0000314"/>
    <property type="project" value="BHF-UCL"/>
</dbReference>
<dbReference type="GO" id="GO:0035325">
    <property type="term" value="F:Toll-like receptor binding"/>
    <property type="evidence" value="ECO:0000266"/>
    <property type="project" value="RGD"/>
</dbReference>
<dbReference type="GO" id="GO:0050431">
    <property type="term" value="F:transforming growth factor beta binding"/>
    <property type="evidence" value="ECO:0000314"/>
    <property type="project" value="BHF-UCL"/>
</dbReference>
<dbReference type="GO" id="GO:1990000">
    <property type="term" value="P:amyloid fibril formation"/>
    <property type="evidence" value="ECO:0000250"/>
    <property type="project" value="UniProtKB"/>
</dbReference>
<dbReference type="GO" id="GO:0150094">
    <property type="term" value="P:amyloid-beta clearance by cellular catabolic process"/>
    <property type="evidence" value="ECO:0000315"/>
    <property type="project" value="ARUK-UCL"/>
</dbReference>
<dbReference type="GO" id="GO:0043277">
    <property type="term" value="P:apoptotic cell clearance"/>
    <property type="evidence" value="ECO:0000266"/>
    <property type="project" value="RGD"/>
</dbReference>
<dbReference type="GO" id="GO:0007166">
    <property type="term" value="P:cell surface receptor signaling pathway"/>
    <property type="evidence" value="ECO:0000266"/>
    <property type="project" value="RGD"/>
</dbReference>
<dbReference type="GO" id="GO:0098742">
    <property type="term" value="P:cell-cell adhesion via plasma-membrane adhesion molecules"/>
    <property type="evidence" value="ECO:0000270"/>
    <property type="project" value="RGD"/>
</dbReference>
<dbReference type="GO" id="GO:1904646">
    <property type="term" value="P:cellular response to amyloid-beta"/>
    <property type="evidence" value="ECO:0000266"/>
    <property type="project" value="RGD"/>
</dbReference>
<dbReference type="GO" id="GO:0071221">
    <property type="term" value="P:cellular response to bacterial lipopeptide"/>
    <property type="evidence" value="ECO:0000266"/>
    <property type="project" value="RGD"/>
</dbReference>
<dbReference type="GO" id="GO:0071726">
    <property type="term" value="P:cellular response to diacyl bacterial lipopeptide"/>
    <property type="evidence" value="ECO:0000250"/>
    <property type="project" value="UniProtKB"/>
</dbReference>
<dbReference type="GO" id="GO:0071447">
    <property type="term" value="P:cellular response to hydroperoxide"/>
    <property type="evidence" value="ECO:0000266"/>
    <property type="project" value="RGD"/>
</dbReference>
<dbReference type="GO" id="GO:0032869">
    <property type="term" value="P:cellular response to insulin stimulus"/>
    <property type="evidence" value="ECO:0000270"/>
    <property type="project" value="RGD"/>
</dbReference>
<dbReference type="GO" id="GO:0071222">
    <property type="term" value="P:cellular response to lipopolysaccharide"/>
    <property type="evidence" value="ECO:0000266"/>
    <property type="project" value="RGD"/>
</dbReference>
<dbReference type="GO" id="GO:0071223">
    <property type="term" value="P:cellular response to lipoteichoic acid"/>
    <property type="evidence" value="ECO:0000266"/>
    <property type="project" value="RGD"/>
</dbReference>
<dbReference type="GO" id="GO:0071404">
    <property type="term" value="P:cellular response to low-density lipoprotein particle stimulus"/>
    <property type="evidence" value="ECO:0000250"/>
    <property type="project" value="UniProtKB"/>
</dbReference>
<dbReference type="GO" id="GO:0034599">
    <property type="term" value="P:cellular response to oxidative stress"/>
    <property type="evidence" value="ECO:0000266"/>
    <property type="project" value="RGD"/>
</dbReference>
<dbReference type="GO" id="GO:0140052">
    <property type="term" value="P:cellular response to oxidised low-density lipoprotein particle stimulus"/>
    <property type="evidence" value="ECO:0000266"/>
    <property type="project" value="RGD"/>
</dbReference>
<dbReference type="GO" id="GO:0019934">
    <property type="term" value="P:cGMP-mediated signaling"/>
    <property type="evidence" value="ECO:0000266"/>
    <property type="project" value="RGD"/>
</dbReference>
<dbReference type="GO" id="GO:0070508">
    <property type="term" value="P:cholesterol import"/>
    <property type="evidence" value="ECO:0000250"/>
    <property type="project" value="UniProtKB"/>
</dbReference>
<dbReference type="GO" id="GO:0030301">
    <property type="term" value="P:cholesterol transport"/>
    <property type="evidence" value="ECO:0000266"/>
    <property type="project" value="RGD"/>
</dbReference>
<dbReference type="GO" id="GO:0050830">
    <property type="term" value="P:defense response to Gram-positive bacterium"/>
    <property type="evidence" value="ECO:0000266"/>
    <property type="project" value="RGD"/>
</dbReference>
<dbReference type="GO" id="GO:0048565">
    <property type="term" value="P:digestive tract development"/>
    <property type="evidence" value="ECO:0000270"/>
    <property type="project" value="RGD"/>
</dbReference>
<dbReference type="GO" id="GO:0042755">
    <property type="term" value="P:eating behavior"/>
    <property type="evidence" value="ECO:0000315"/>
    <property type="project" value="RGD"/>
</dbReference>
<dbReference type="GO" id="GO:0097009">
    <property type="term" value="P:energy homeostasis"/>
    <property type="evidence" value="ECO:0000315"/>
    <property type="project" value="UniProtKB"/>
</dbReference>
<dbReference type="GO" id="GO:0006631">
    <property type="term" value="P:fatty acid metabolic process"/>
    <property type="evidence" value="ECO:0000314"/>
    <property type="project" value="RGD"/>
</dbReference>
<dbReference type="GO" id="GO:0019395">
    <property type="term" value="P:fatty acid oxidation"/>
    <property type="evidence" value="ECO:0000315"/>
    <property type="project" value="RGD"/>
</dbReference>
<dbReference type="GO" id="GO:0015908">
    <property type="term" value="P:fatty acid transport"/>
    <property type="evidence" value="ECO:0000314"/>
    <property type="project" value="RGD"/>
</dbReference>
<dbReference type="GO" id="GO:0050892">
    <property type="term" value="P:intestinal absorption"/>
    <property type="evidence" value="ECO:0000250"/>
    <property type="project" value="UniProtKB"/>
</dbReference>
<dbReference type="GO" id="GO:0030299">
    <property type="term" value="P:intestinal cholesterol absorption"/>
    <property type="evidence" value="ECO:0000250"/>
    <property type="project" value="UniProtKB"/>
</dbReference>
<dbReference type="GO" id="GO:0019915">
    <property type="term" value="P:lipid storage"/>
    <property type="evidence" value="ECO:0000266"/>
    <property type="project" value="RGD"/>
</dbReference>
<dbReference type="GO" id="GO:1990379">
    <property type="term" value="P:lipid transport across blood-brain barrier"/>
    <property type="evidence" value="ECO:0000266"/>
    <property type="project" value="RGD"/>
</dbReference>
<dbReference type="GO" id="GO:0042953">
    <property type="term" value="P:lipoprotein transport"/>
    <property type="evidence" value="ECO:0000266"/>
    <property type="project" value="RGD"/>
</dbReference>
<dbReference type="GO" id="GO:0015911">
    <property type="term" value="P:long-chain fatty acid import across plasma membrane"/>
    <property type="evidence" value="ECO:0000266"/>
    <property type="project" value="RGD"/>
</dbReference>
<dbReference type="GO" id="GO:0044539">
    <property type="term" value="P:long-chain fatty acid import into cell"/>
    <property type="evidence" value="ECO:0000250"/>
    <property type="project" value="UniProtKB"/>
</dbReference>
<dbReference type="GO" id="GO:0001676">
    <property type="term" value="P:long-chain fatty acid metabolic process"/>
    <property type="evidence" value="ECO:0000315"/>
    <property type="project" value="RGD"/>
</dbReference>
<dbReference type="GO" id="GO:0015909">
    <property type="term" value="P:long-chain fatty acid transport"/>
    <property type="evidence" value="ECO:0000315"/>
    <property type="project" value="RGD"/>
</dbReference>
<dbReference type="GO" id="GO:0034383">
    <property type="term" value="P:low-density lipoprotein particle clearance"/>
    <property type="evidence" value="ECO:0000266"/>
    <property type="project" value="RGD"/>
</dbReference>
<dbReference type="GO" id="GO:0055096">
    <property type="term" value="P:low-density lipoprotein particle mediated signaling"/>
    <property type="evidence" value="ECO:0000266"/>
    <property type="project" value="RGD"/>
</dbReference>
<dbReference type="GO" id="GO:0000165">
    <property type="term" value="P:MAPK cascade"/>
    <property type="evidence" value="ECO:0000266"/>
    <property type="project" value="RGD"/>
</dbReference>
<dbReference type="GO" id="GO:0001893">
    <property type="term" value="P:maternal placenta development"/>
    <property type="evidence" value="ECO:0000270"/>
    <property type="project" value="RGD"/>
</dbReference>
<dbReference type="GO" id="GO:0016525">
    <property type="term" value="P:negative regulation of angiogenesis"/>
    <property type="evidence" value="ECO:0000315"/>
    <property type="project" value="RGD"/>
</dbReference>
<dbReference type="GO" id="GO:0010629">
    <property type="term" value="P:negative regulation of gene expression"/>
    <property type="evidence" value="ECO:0000266"/>
    <property type="project" value="RGD"/>
</dbReference>
<dbReference type="GO" id="GO:0042308">
    <property type="term" value="P:negative regulation of protein import into nucleus"/>
    <property type="evidence" value="ECO:0000266"/>
    <property type="project" value="RGD"/>
</dbReference>
<dbReference type="GO" id="GO:0003085">
    <property type="term" value="P:negative regulation of systemic arterial blood pressure"/>
    <property type="evidence" value="ECO:0000315"/>
    <property type="project" value="RGD"/>
</dbReference>
<dbReference type="GO" id="GO:0000122">
    <property type="term" value="P:negative regulation of transcription by RNA polymerase II"/>
    <property type="evidence" value="ECO:0000266"/>
    <property type="project" value="RGD"/>
</dbReference>
<dbReference type="GO" id="GO:0038060">
    <property type="term" value="P:nitric oxide-cGMP-mediated signaling"/>
    <property type="evidence" value="ECO:0000266"/>
    <property type="project" value="RGD"/>
</dbReference>
<dbReference type="GO" id="GO:0150024">
    <property type="term" value="P:oxidised low-density lipoprotein particle clearance"/>
    <property type="evidence" value="ECO:0000266"/>
    <property type="project" value="RGD"/>
</dbReference>
<dbReference type="GO" id="GO:0006910">
    <property type="term" value="P:phagocytosis, recognition"/>
    <property type="evidence" value="ECO:0000266"/>
    <property type="project" value="RGD"/>
</dbReference>
<dbReference type="GO" id="GO:0034381">
    <property type="term" value="P:plasma lipoprotein particle clearance"/>
    <property type="evidence" value="ECO:0000266"/>
    <property type="project" value="RGD"/>
</dbReference>
<dbReference type="GO" id="GO:0030194">
    <property type="term" value="P:positive regulation of blood coagulation"/>
    <property type="evidence" value="ECO:0000266"/>
    <property type="project" value="RGD"/>
</dbReference>
<dbReference type="GO" id="GO:2000334">
    <property type="term" value="P:positive regulation of blood microparticle formation"/>
    <property type="evidence" value="ECO:0000266"/>
    <property type="project" value="RGD"/>
</dbReference>
<dbReference type="GO" id="GO:0043123">
    <property type="term" value="P:positive regulation of canonical NF-kappaB signal transduction"/>
    <property type="evidence" value="ECO:0000266"/>
    <property type="project" value="RGD"/>
</dbReference>
<dbReference type="GO" id="GO:0001954">
    <property type="term" value="P:positive regulation of cell-matrix adhesion"/>
    <property type="evidence" value="ECO:0000266"/>
    <property type="project" value="RGD"/>
</dbReference>
<dbReference type="GO" id="GO:0010886">
    <property type="term" value="P:positive regulation of cholesterol storage"/>
    <property type="evidence" value="ECO:0000266"/>
    <property type="project" value="RGD"/>
</dbReference>
<dbReference type="GO" id="GO:0120162">
    <property type="term" value="P:positive regulation of cold-induced thermogenesis"/>
    <property type="evidence" value="ECO:0000250"/>
    <property type="project" value="YuBioLab"/>
</dbReference>
<dbReference type="GO" id="GO:0001819">
    <property type="term" value="P:positive regulation of cytokine production"/>
    <property type="evidence" value="ECO:0000315"/>
    <property type="project" value="RGD"/>
</dbReference>
<dbReference type="GO" id="GO:0007204">
    <property type="term" value="P:positive regulation of cytosolic calcium ion concentration"/>
    <property type="evidence" value="ECO:0000250"/>
    <property type="project" value="UniProtKB"/>
</dbReference>
<dbReference type="GO" id="GO:0070374">
    <property type="term" value="P:positive regulation of ERK1 and ERK2 cascade"/>
    <property type="evidence" value="ECO:0000266"/>
    <property type="project" value="RGD"/>
</dbReference>
<dbReference type="GO" id="GO:0010628">
    <property type="term" value="P:positive regulation of gene expression"/>
    <property type="evidence" value="ECO:0000266"/>
    <property type="project" value="RGD"/>
</dbReference>
<dbReference type="GO" id="GO:0045725">
    <property type="term" value="P:positive regulation of glycogen biosynthetic process"/>
    <property type="evidence" value="ECO:0000314"/>
    <property type="project" value="RGD"/>
</dbReference>
<dbReference type="GO" id="GO:0032731">
    <property type="term" value="P:positive regulation of interleukin-1 beta production"/>
    <property type="evidence" value="ECO:0000250"/>
    <property type="project" value="UniProtKB"/>
</dbReference>
<dbReference type="GO" id="GO:0032735">
    <property type="term" value="P:positive regulation of interleukin-12 production"/>
    <property type="evidence" value="ECO:0000266"/>
    <property type="project" value="RGD"/>
</dbReference>
<dbReference type="GO" id="GO:0032755">
    <property type="term" value="P:positive regulation of interleukin-6 production"/>
    <property type="evidence" value="ECO:0000266"/>
    <property type="project" value="RGD"/>
</dbReference>
<dbReference type="GO" id="GO:0060907">
    <property type="term" value="P:positive regulation of macrophage cytokine production"/>
    <property type="evidence" value="ECO:0000266"/>
    <property type="project" value="RGD"/>
</dbReference>
<dbReference type="GO" id="GO:0010744">
    <property type="term" value="P:positive regulation of macrophage derived foam cell differentiation"/>
    <property type="evidence" value="ECO:0000266"/>
    <property type="project" value="RGD"/>
</dbReference>
<dbReference type="GO" id="GO:0043410">
    <property type="term" value="P:positive regulation of MAPK cascade"/>
    <property type="evidence" value="ECO:0000266"/>
    <property type="project" value="RGD"/>
</dbReference>
<dbReference type="GO" id="GO:0045429">
    <property type="term" value="P:positive regulation of nitric oxide biosynthetic process"/>
    <property type="evidence" value="ECO:0000266"/>
    <property type="project" value="RGD"/>
</dbReference>
<dbReference type="GO" id="GO:1900227">
    <property type="term" value="P:positive regulation of NLRP3 inflammasome complex assembly"/>
    <property type="evidence" value="ECO:0000250"/>
    <property type="project" value="UniProtKB"/>
</dbReference>
<dbReference type="GO" id="GO:0050766">
    <property type="term" value="P:positive regulation of phagocytosis"/>
    <property type="evidence" value="ECO:0000315"/>
    <property type="project" value="RGD"/>
</dbReference>
<dbReference type="GO" id="GO:0060100">
    <property type="term" value="P:positive regulation of phagocytosis, engulfment"/>
    <property type="evidence" value="ECO:0000266"/>
    <property type="project" value="RGD"/>
</dbReference>
<dbReference type="GO" id="GO:1903428">
    <property type="term" value="P:positive regulation of reactive oxygen species biosynthetic process"/>
    <property type="evidence" value="ECO:0000266"/>
    <property type="project" value="RGD"/>
</dbReference>
<dbReference type="GO" id="GO:2000379">
    <property type="term" value="P:positive regulation of reactive oxygen species metabolic process"/>
    <property type="evidence" value="ECO:0000266"/>
    <property type="project" value="RGD"/>
</dbReference>
<dbReference type="GO" id="GO:0090208">
    <property type="term" value="P:positive regulation of triglyceride metabolic process"/>
    <property type="evidence" value="ECO:0000314"/>
    <property type="project" value="RGD"/>
</dbReference>
<dbReference type="GO" id="GO:0032760">
    <property type="term" value="P:positive regulation of tumor necrosis factor production"/>
    <property type="evidence" value="ECO:0000266"/>
    <property type="project" value="RGD"/>
</dbReference>
<dbReference type="GO" id="GO:0031623">
    <property type="term" value="P:receptor internalization"/>
    <property type="evidence" value="ECO:0000250"/>
    <property type="project" value="UniProtKB"/>
</dbReference>
<dbReference type="GO" id="GO:0006898">
    <property type="term" value="P:receptor-mediated endocytosis"/>
    <property type="evidence" value="ECO:0000315"/>
    <property type="project" value="ARUK-UCL"/>
</dbReference>
<dbReference type="GO" id="GO:0098900">
    <property type="term" value="P:regulation of action potential"/>
    <property type="evidence" value="ECO:0000266"/>
    <property type="project" value="RGD"/>
</dbReference>
<dbReference type="GO" id="GO:0043254">
    <property type="term" value="P:regulation of protein-containing complex assembly"/>
    <property type="evidence" value="ECO:0000266"/>
    <property type="project" value="RGD"/>
</dbReference>
<dbReference type="GO" id="GO:2000121">
    <property type="term" value="P:regulation of removal of superoxide radicals"/>
    <property type="evidence" value="ECO:0000266"/>
    <property type="project" value="RGD"/>
</dbReference>
<dbReference type="GO" id="GO:0034121">
    <property type="term" value="P:regulation of toll-like receptor signaling pathway"/>
    <property type="evidence" value="ECO:0000266"/>
    <property type="project" value="RGD"/>
</dbReference>
<dbReference type="GO" id="GO:0014823">
    <property type="term" value="P:response to activity"/>
    <property type="evidence" value="ECO:0000270"/>
    <property type="project" value="RGD"/>
</dbReference>
<dbReference type="GO" id="GO:0009617">
    <property type="term" value="P:response to bacterium"/>
    <property type="evidence" value="ECO:0000266"/>
    <property type="project" value="RGD"/>
</dbReference>
<dbReference type="GO" id="GO:0032355">
    <property type="term" value="P:response to estradiol"/>
    <property type="evidence" value="ECO:0000270"/>
    <property type="project" value="RGD"/>
</dbReference>
<dbReference type="GO" id="GO:0070542">
    <property type="term" value="P:response to fatty acid"/>
    <property type="evidence" value="ECO:0000314"/>
    <property type="project" value="UniProtKB"/>
</dbReference>
<dbReference type="GO" id="GO:0060416">
    <property type="term" value="P:response to growth hormone"/>
    <property type="evidence" value="ECO:0000270"/>
    <property type="project" value="RGD"/>
</dbReference>
<dbReference type="GO" id="GO:0070543">
    <property type="term" value="P:response to linoleic acid"/>
    <property type="evidence" value="ECO:0000250"/>
    <property type="project" value="UniProtKB"/>
</dbReference>
<dbReference type="GO" id="GO:0033993">
    <property type="term" value="P:response to lipid"/>
    <property type="evidence" value="ECO:0000315"/>
    <property type="project" value="UniProtKB"/>
</dbReference>
<dbReference type="GO" id="GO:0009612">
    <property type="term" value="P:response to mechanical stimulus"/>
    <property type="evidence" value="ECO:0000315"/>
    <property type="project" value="RGD"/>
</dbReference>
<dbReference type="GO" id="GO:0007584">
    <property type="term" value="P:response to nutrient"/>
    <property type="evidence" value="ECO:0000270"/>
    <property type="project" value="RGD"/>
</dbReference>
<dbReference type="GO" id="GO:0035634">
    <property type="term" value="P:response to stilbenoid"/>
    <property type="evidence" value="ECO:0000266"/>
    <property type="project" value="RGD"/>
</dbReference>
<dbReference type="GO" id="GO:0033552">
    <property type="term" value="P:response to vitamin B3"/>
    <property type="evidence" value="ECO:0000270"/>
    <property type="project" value="RGD"/>
</dbReference>
<dbReference type="GO" id="GO:0009410">
    <property type="term" value="P:response to xenobiotic stimulus"/>
    <property type="evidence" value="ECO:0000270"/>
    <property type="project" value="RGD"/>
</dbReference>
<dbReference type="GO" id="GO:0050909">
    <property type="term" value="P:sensory perception of taste"/>
    <property type="evidence" value="ECO:0000250"/>
    <property type="project" value="UniProtKB"/>
</dbReference>
<dbReference type="GO" id="GO:0015912">
    <property type="term" value="P:short-chain fatty acid transport"/>
    <property type="evidence" value="ECO:0000266"/>
    <property type="project" value="RGD"/>
</dbReference>
<dbReference type="GO" id="GO:0006641">
    <property type="term" value="P:triglyceride metabolic process"/>
    <property type="evidence" value="ECO:0000315"/>
    <property type="project" value="RGD"/>
</dbReference>
<dbReference type="GO" id="GO:0034197">
    <property type="term" value="P:triglyceride transport"/>
    <property type="evidence" value="ECO:0000250"/>
    <property type="project" value="UniProtKB"/>
</dbReference>
<dbReference type="InterPro" id="IPR005428">
    <property type="entry name" value="CD36/SCARB1/SNMP1"/>
</dbReference>
<dbReference type="InterPro" id="IPR002159">
    <property type="entry name" value="CD36_fam"/>
</dbReference>
<dbReference type="PANTHER" id="PTHR11923:SF12">
    <property type="entry name" value="PLATELET GLYCOPROTEIN 4"/>
    <property type="match status" value="1"/>
</dbReference>
<dbReference type="PANTHER" id="PTHR11923">
    <property type="entry name" value="SCAVENGER RECEPTOR CLASS B TYPE-1 SR-B1"/>
    <property type="match status" value="1"/>
</dbReference>
<dbReference type="Pfam" id="PF01130">
    <property type="entry name" value="CD36"/>
    <property type="match status" value="1"/>
</dbReference>
<dbReference type="PRINTS" id="PR01610">
    <property type="entry name" value="CD36ANTIGEN"/>
</dbReference>
<dbReference type="PRINTS" id="PR01609">
    <property type="entry name" value="CD36FAMILY"/>
</dbReference>
<evidence type="ECO:0000250" key="1"/>
<evidence type="ECO:0000250" key="2">
    <source>
        <dbReference type="UniProtKB" id="P16671"/>
    </source>
</evidence>
<evidence type="ECO:0000250" key="3">
    <source>
        <dbReference type="UniProtKB" id="Q08857"/>
    </source>
</evidence>
<evidence type="ECO:0000255" key="4"/>
<evidence type="ECO:0000269" key="5">
    <source>
    </source>
</evidence>
<evidence type="ECO:0000269" key="6">
    <source>
    </source>
</evidence>
<evidence type="ECO:0000269" key="7">
    <source>
    </source>
</evidence>
<evidence type="ECO:0000269" key="8">
    <source>
    </source>
</evidence>
<evidence type="ECO:0000269" key="9">
    <source>
    </source>
</evidence>
<evidence type="ECO:0000269" key="10">
    <source>
    </source>
</evidence>
<evidence type="ECO:0000305" key="11"/>
<evidence type="ECO:0000305" key="12">
    <source>
    </source>
</evidence>
<organism>
    <name type="scientific">Rattus norvegicus</name>
    <name type="common">Rat</name>
    <dbReference type="NCBI Taxonomy" id="10116"/>
    <lineage>
        <taxon>Eukaryota</taxon>
        <taxon>Metazoa</taxon>
        <taxon>Chordata</taxon>
        <taxon>Craniata</taxon>
        <taxon>Vertebrata</taxon>
        <taxon>Euteleostomi</taxon>
        <taxon>Mammalia</taxon>
        <taxon>Eutheria</taxon>
        <taxon>Euarchontoglires</taxon>
        <taxon>Glires</taxon>
        <taxon>Rodentia</taxon>
        <taxon>Myomorpha</taxon>
        <taxon>Muroidea</taxon>
        <taxon>Muridae</taxon>
        <taxon>Murinae</taxon>
        <taxon>Rattus</taxon>
    </lineage>
</organism>
<gene>
    <name type="primary">Cd36</name>
    <name type="synonym">Fat</name>
</gene>
<accession>Q07969</accession>
<accession>Q925W0</accession>
<feature type="initiator methionine" description="Removed" evidence="8 10">
    <location>
        <position position="1"/>
    </location>
</feature>
<feature type="chain" id="PRO_0000144154" description="Platelet glycoprotein 4">
    <location>
        <begin position="2"/>
        <end position="472"/>
    </location>
</feature>
<feature type="topological domain" description="Cytoplasmic" evidence="4">
    <location>
        <begin position="2"/>
        <end position="7"/>
    </location>
</feature>
<feature type="transmembrane region" description="Helical" evidence="4">
    <location>
        <begin position="8"/>
        <end position="29"/>
    </location>
</feature>
<feature type="topological domain" description="Extracellular" evidence="4">
    <location>
        <begin position="30"/>
        <end position="439"/>
    </location>
</feature>
<feature type="transmembrane region" description="Helical" evidence="4">
    <location>
        <begin position="440"/>
        <end position="461"/>
    </location>
</feature>
<feature type="topological domain" description="Cytoplasmic" evidence="4">
    <location>
        <begin position="462"/>
        <end position="472"/>
    </location>
</feature>
<feature type="region of interest" description="Required for interaction with thrombospondins, THBS1 and THBS2" evidence="1">
    <location>
        <begin position="93"/>
        <end position="120"/>
    </location>
</feature>
<feature type="region of interest" description="Interaction with PTK2, PXN and LYN" evidence="2">
    <location>
        <begin position="460"/>
        <end position="472"/>
    </location>
</feature>
<feature type="site" description="Critical for TLR4-TLR6 dimerization and signaling" evidence="2">
    <location>
        <position position="463"/>
    </location>
</feature>
<feature type="lipid moiety-binding region" description="S-palmitoyl cysteine" evidence="12">
    <location>
        <position position="3"/>
    </location>
</feature>
<feature type="lipid moiety-binding region" description="S-palmitoyl cysteine" evidence="12">
    <location>
        <position position="7"/>
    </location>
</feature>
<feature type="lipid moiety-binding region" description="S-palmitoyl cysteine" evidence="1">
    <location>
        <position position="464"/>
    </location>
</feature>
<feature type="lipid moiety-binding region" description="S-palmitoyl cysteine" evidence="1">
    <location>
        <position position="466"/>
    </location>
</feature>
<feature type="glycosylation site" description="N-linked (GlcNAc...) asparagine" evidence="4">
    <location>
        <position position="79"/>
    </location>
</feature>
<feature type="glycosylation site" description="N-linked (GlcNAc...) asparagine" evidence="4">
    <location>
        <position position="102"/>
    </location>
</feature>
<feature type="glycosylation site" description="N-linked (GlcNAc...) asparagine" evidence="4">
    <location>
        <position position="134"/>
    </location>
</feature>
<feature type="glycosylation site" description="N-linked (GlcNAc...) asparagine" evidence="4">
    <location>
        <position position="205"/>
    </location>
</feature>
<feature type="glycosylation site" description="N-linked (GlcNAc...) asparagine" evidence="4">
    <location>
        <position position="220"/>
    </location>
</feature>
<feature type="glycosylation site" description="N-linked (GlcNAc...) asparagine" evidence="4">
    <location>
        <position position="235"/>
    </location>
</feature>
<feature type="glycosylation site" description="N-linked (GlcNAc...) asparagine" evidence="4">
    <location>
        <position position="247"/>
    </location>
</feature>
<feature type="glycosylation site" description="N-linked (GlcNAc...) asparagine" evidence="4">
    <location>
        <position position="321"/>
    </location>
</feature>
<feature type="glycosylation site" description="N-linked (GlcNAc...) asparagine" evidence="4">
    <location>
        <position position="417"/>
    </location>
</feature>
<feature type="disulfide bond" evidence="1">
    <location>
        <begin position="243"/>
        <end position="311"/>
    </location>
</feature>
<feature type="disulfide bond" evidence="1">
    <location>
        <begin position="272"/>
        <end position="333"/>
    </location>
</feature>
<feature type="disulfide bond" evidence="1">
    <location>
        <begin position="313"/>
        <end position="322"/>
    </location>
</feature>
<feature type="cross-link" description="Glycyl lysine isopeptide (Lys-Gly) (interchain with G-Cter in ubiquitin)" evidence="2">
    <location>
        <position position="469"/>
    </location>
</feature>
<feature type="cross-link" description="Glycyl lysine isopeptide (Lys-Gly) (interchain with G-Cter in ubiquitin)" evidence="2">
    <location>
        <position position="472"/>
    </location>
</feature>
<feature type="sequence conflict" description="In Ref. 1; AAA02878." evidence="11" ref="1">
    <original>I</original>
    <variation>V</variation>
    <location>
        <position position="67"/>
    </location>
</feature>
<feature type="sequence conflict" description="In Ref. 1; AAA02878." evidence="11" ref="1">
    <original>K</original>
    <variation>I</variation>
    <location>
        <position position="86"/>
    </location>
</feature>
<feature type="sequence conflict" description="In Ref. 1; AAA02878." evidence="11" ref="1">
    <original>F</original>
    <variation>S</variation>
    <location>
        <position position="215"/>
    </location>
</feature>
<feature type="sequence conflict" description="In Ref. 1; AAA02878." evidence="11" ref="1">
    <original>FV</original>
    <variation>LG</variation>
    <location>
        <begin position="257"/>
        <end position="258"/>
    </location>
</feature>
<feature type="sequence conflict" description="In Ref. 1; AAA02878." evidence="11" ref="1">
    <original>Q</original>
    <variation>R</variation>
    <location>
        <position position="262"/>
    </location>
</feature>
<feature type="sequence conflict" description="In Ref. 1; AAA02878." evidence="11" ref="1">
    <original>I</original>
    <variation>N</variation>
    <location>
        <position position="341"/>
    </location>
</feature>
<feature type="sequence conflict" description="In Ref. 1; AAA02878." evidence="11" ref="1">
    <original>N</original>
    <variation>T</variation>
    <location>
        <position position="363"/>
    </location>
</feature>
<feature type="sequence conflict" description="In Ref. 1; AAA02878." evidence="11" ref="1">
    <original>A</original>
    <variation>S</variation>
    <location>
        <position position="384"/>
    </location>
</feature>
<proteinExistence type="evidence at protein level"/>
<keyword id="KW-0130">Cell adhesion</keyword>
<keyword id="KW-1003">Cell membrane</keyword>
<keyword id="KW-0903">Direct protein sequencing</keyword>
<keyword id="KW-1015">Disulfide bond</keyword>
<keyword id="KW-0325">Glycoprotein</keyword>
<keyword id="KW-0333">Golgi apparatus</keyword>
<keyword id="KW-1017">Isopeptide bond</keyword>
<keyword id="KW-0445">Lipid transport</keyword>
<keyword id="KW-0449">Lipoprotein</keyword>
<keyword id="KW-0472">Membrane</keyword>
<keyword id="KW-0564">Palmitate</keyword>
<keyword id="KW-0675">Receptor</keyword>
<keyword id="KW-1185">Reference proteome</keyword>
<keyword id="KW-0812">Transmembrane</keyword>
<keyword id="KW-1133">Transmembrane helix</keyword>
<keyword id="KW-0813">Transport</keyword>
<keyword id="KW-0832">Ubl conjugation</keyword>
<sequence length="472" mass="52731">MGCDRNCGLITGAVIGAVLAVFGGILMPVGDLLIEKTIKREVVLEEGTIAFKNWVKTGTTVYRQFWIFDVQNPEEVAKNSSKIKVKQRGPYTYRVRYLAKENITQDPKDSTVSFVQPNGAIFEPSLSVGTENDNFTVLNLAVAAAPHIYTNSFVQGVLNSLIKKSKSSMFQTRSLKELLWGYKDPFLSLVPYPISTTVGVFYPYNNTVDGVYKVFNGKDNISKVAIIDTYKGKRNLSYWESYCDMINGTDAASFPPFVEKSQTLRFFSSDICRSIYAVFESEVNLKGIPVYRFVLPANAFASPLQNPDNHCFCTEKVISNNCTSYGVLDIGKCKEGKPVYISLPHFLHASPDVSEPIEGLNPNEDEHRTYLDVEPITGFTLQFAKRLQVNILVKPARKIEALKNLKRPYIVPILWLNETGTIGDEKAEMFRNQVTGKIKLLGLVEMVLLGVGVVMFVAFMISYCACRSKNGK</sequence>
<reference key="1">
    <citation type="journal article" date="1993" name="J. Biol. Chem.">
        <title>Cloning of a rat adipocyte membrane protein implicated in binding or transport of long-chain fatty acids that is induced during preadipocyte differentiation. Homology with human CD36.</title>
        <authorList>
            <person name="Abumrad N.A."/>
            <person name="El-Maghrabi M.R."/>
            <person name="Amri E.-Z."/>
            <person name="Lopez E."/>
            <person name="Grimaldi P.A."/>
        </authorList>
    </citation>
    <scope>NUCLEOTIDE SEQUENCE [MRNA]</scope>
    <scope>TISSUE SPECIFICITY</scope>
    <scope>DEVELOPMENTAL STAGE</scope>
    <source>
        <tissue>Adipocyte</tissue>
    </source>
</reference>
<reference key="2">
    <citation type="journal article" date="1999" name="Am. J. Physiol.">
        <title>Fatty acid translocase/CD36 mediates the uptake of palmitate by type II pneumocytes.</title>
        <authorList>
            <person name="Guthmann F."/>
            <person name="Haupt R."/>
            <person name="Looman A.C."/>
            <person name="Spener F."/>
            <person name="Ruestow B."/>
        </authorList>
    </citation>
    <scope>NUCLEOTIDE SEQUENCE [MRNA]</scope>
    <source>
        <strain>Wistar</strain>
    </source>
</reference>
<reference key="3">
    <citation type="submission" date="1998-12" db="EMBL/GenBank/DDBJ databases">
        <title>Potential allele of rat CD36 antigen.</title>
        <authorList>
            <person name="Zhang X."/>
            <person name="Mayrhofer G."/>
            <person name="Ey P.L."/>
        </authorList>
    </citation>
    <scope>NUCLEOTIDE SEQUENCE [MRNA]</scope>
    <source>
        <strain>Dark agouti</strain>
    </source>
</reference>
<reference key="4">
    <citation type="journal article" date="1993" name="J. Lipid Res.">
        <title>Purification of the major substrate for palmitoylation in rat adipocytes: N-terminal homology with CD36 and evidence for cell surface acylation.</title>
        <authorList>
            <person name="Jochen A."/>
            <person name="Hays J."/>
        </authorList>
    </citation>
    <scope>PROTEIN SEQUENCE OF 2-31</scope>
    <scope>PALMITOYLATION AT CYS-3 AND CYS-7</scope>
    <source>
        <tissue>Adipocyte</tissue>
    </source>
</reference>
<reference key="5">
    <citation type="journal article" date="1993" name="J. Membr. Biol.">
        <title>Binding of sulfosuccinimidyl fatty acids to adipocyte membrane proteins: isolation and amino-terminal sequence of an 88-kD protein implicated in transport of long-chain fatty acids.</title>
        <authorList>
            <person name="Harmon C.M."/>
            <person name="Abumrad N.A."/>
        </authorList>
    </citation>
    <scope>PROTEIN SEQUENCE OF 2-16</scope>
    <scope>FUNCTION</scope>
    <source>
        <strain>Sprague-Dawley</strain>
        <tissue>Adipocyte</tissue>
    </source>
</reference>
<reference key="6">
    <citation type="journal article" date="2005" name="J. Clin. Invest.">
        <title>CD36 involvement in orosensory detection of dietary lipids, spontaneous fat preference, and digestive secretions.</title>
        <authorList>
            <person name="Laugerette F."/>
            <person name="Passilly-Degrace P."/>
            <person name="Patris B."/>
            <person name="Niot I."/>
            <person name="Febbraio M."/>
            <person name="Montmayeur J.P."/>
            <person name="Besnard P."/>
        </authorList>
    </citation>
    <scope>FUNCTION</scope>
</reference>
<reference key="7">
    <citation type="journal article" date="2011" name="J. Biol. Chem.">
        <title>Luminal lipid regulates CD36 levels and downstream signaling to stimulate chylomicron synthesis.</title>
        <authorList>
            <person name="Tran T.T."/>
            <person name="Poirier H."/>
            <person name="Clement L."/>
            <person name="Nassir F."/>
            <person name="Pelsers M.M."/>
            <person name="Petit V."/>
            <person name="Degrace P."/>
            <person name="Monnot M.C."/>
            <person name="Glatz J.F."/>
            <person name="Abumrad N.A."/>
            <person name="Besnard P."/>
            <person name="Niot I."/>
        </authorList>
    </citation>
    <scope>FUNCTION</scope>
    <scope>TISSUE SPECIFICITY</scope>
    <scope>SUBCELLULAR LOCATION</scope>
    <scope>UBIQUITINATION</scope>
</reference>
<reference key="8">
    <citation type="journal article" date="2013" name="Diabetes">
        <title>FAT/CD36: a major regulator of neuronal fatty acid sensing and energy homeostasis in rats and mice.</title>
        <authorList>
            <person name="Le Foll C."/>
            <person name="Dunn-Meynell A."/>
            <person name="Musatov S."/>
            <person name="Magnan C."/>
            <person name="Levin B.E."/>
        </authorList>
    </citation>
    <scope>FUNCTION</scope>
</reference>
<name>CD36_RAT</name>
<protein>
    <recommendedName>
        <fullName>Platelet glycoprotein 4</fullName>
    </recommendedName>
    <alternativeName>
        <fullName>Adipocyte membrane protein</fullName>
    </alternativeName>
    <alternativeName>
        <fullName>Fatty acid translocase</fullName>
    </alternativeName>
    <alternativeName>
        <fullName>Fatty acid transport protein</fullName>
    </alternativeName>
    <alternativeName>
        <fullName>Glycoprotein IIIb</fullName>
        <shortName>GPIIIB</shortName>
    </alternativeName>
    <alternativeName>
        <fullName>PAS IV</fullName>
    </alternativeName>
    <alternativeName>
        <fullName>PAS-4</fullName>
    </alternativeName>
    <alternativeName>
        <fullName>Platelet glycoprotein IV</fullName>
        <shortName>GPIV</shortName>
    </alternativeName>
    <cdAntigenName>CD36</cdAntigenName>
</protein>